<gene>
    <name evidence="1" type="primary">yabA</name>
    <name type="ordered locus">SEQ_1826</name>
</gene>
<name>YABA_STRE4</name>
<comment type="function">
    <text evidence="1">Involved in control of chromosome replication initiation. Inhibits the cooperative binding of DnaA to the oriC region, thus negatively regulating initiation of chromosome replication. Inhibits the ability of DnaA-ATP to form a helix on DNA; does not disassemble preformed DnaA-DNA helices. Decreases the residence time of DnaA on the chromosome at its binding sites (oriC, replication forks and promoter-binding sites). Tethers DnaA to the replication machinery via the DNA polymerase beta sliding clamp subunit (dnaN). Associates with oriC and other DnaA targets on the chromosome in a DnaA-dependent manner.</text>
</comment>
<comment type="cofactor">
    <cofactor evidence="1">
        <name>Zn(2+)</name>
        <dbReference type="ChEBI" id="CHEBI:29105"/>
    </cofactor>
    <text evidence="1">Binds 1 zinc ion per subunit.</text>
</comment>
<comment type="subunit">
    <text evidence="1">Homotetramer. Interacts with both DnaA and DnaN, acting as a bridge between these two proteins.</text>
</comment>
<comment type="subcellular location">
    <subcellularLocation>
        <location evidence="1">Cytoplasm</location>
        <location evidence="1">Nucleoid</location>
    </subcellularLocation>
    <text evidence="1">Localizes in tight foci, which correspond to the replisome at mid-cell throughout the cell cycle.</text>
</comment>
<comment type="similarity">
    <text evidence="1">Belongs to the YabA family.</text>
</comment>
<sequence>MNKKELFDAFDGFSQNLMVTLAEIEAMKKQVQGLVEENTILRLENTKLRERLSQLEHENLAKTSSKQGKDHLEGIYDEGFHICNFFYGQRRENDEECMFCRELLDRK</sequence>
<reference key="1">
    <citation type="journal article" date="2009" name="PLoS Pathog.">
        <title>Genomic evidence for the evolution of Streptococcus equi: host restriction, increased virulence, and genetic exchange with human pathogens.</title>
        <authorList>
            <person name="Holden M.T.G."/>
            <person name="Heather Z."/>
            <person name="Paillot R."/>
            <person name="Steward K.F."/>
            <person name="Webb K."/>
            <person name="Ainslie F."/>
            <person name="Jourdan T."/>
            <person name="Bason N.C."/>
            <person name="Holroyd N.E."/>
            <person name="Mungall K."/>
            <person name="Quail M.A."/>
            <person name="Sanders M."/>
            <person name="Simmonds M."/>
            <person name="Willey D."/>
            <person name="Brooks K."/>
            <person name="Aanensen D.M."/>
            <person name="Spratt B.G."/>
            <person name="Jolley K.A."/>
            <person name="Maiden M.C.J."/>
            <person name="Kehoe M."/>
            <person name="Chanter N."/>
            <person name="Bentley S.D."/>
            <person name="Robinson C."/>
            <person name="Maskell D.J."/>
            <person name="Parkhill J."/>
            <person name="Waller A.S."/>
        </authorList>
    </citation>
    <scope>NUCLEOTIDE SEQUENCE [LARGE SCALE GENOMIC DNA]</scope>
    <source>
        <strain>4047</strain>
    </source>
</reference>
<proteinExistence type="inferred from homology"/>
<feature type="chain" id="PRO_1000164307" description="Replication initiation control protein YabA">
    <location>
        <begin position="1"/>
        <end position="107"/>
    </location>
</feature>
<feature type="binding site" evidence="1">
    <location>
        <position position="81"/>
    </location>
    <ligand>
        <name>Zn(2+)</name>
        <dbReference type="ChEBI" id="CHEBI:29105"/>
    </ligand>
</feature>
<feature type="binding site" evidence="1">
    <location>
        <position position="83"/>
    </location>
    <ligand>
        <name>Zn(2+)</name>
        <dbReference type="ChEBI" id="CHEBI:29105"/>
    </ligand>
</feature>
<feature type="binding site" evidence="1">
    <location>
        <position position="97"/>
    </location>
    <ligand>
        <name>Zn(2+)</name>
        <dbReference type="ChEBI" id="CHEBI:29105"/>
    </ligand>
</feature>
<feature type="binding site" evidence="1">
    <location>
        <position position="100"/>
    </location>
    <ligand>
        <name>Zn(2+)</name>
        <dbReference type="ChEBI" id="CHEBI:29105"/>
    </ligand>
</feature>
<evidence type="ECO:0000255" key="1">
    <source>
        <dbReference type="HAMAP-Rule" id="MF_01159"/>
    </source>
</evidence>
<dbReference type="EMBL" id="FM204883">
    <property type="protein sequence ID" value="CAW94973.1"/>
    <property type="molecule type" value="Genomic_DNA"/>
</dbReference>
<dbReference type="RefSeq" id="WP_012680029.1">
    <property type="nucleotide sequence ID" value="NC_012471.1"/>
</dbReference>
<dbReference type="SMR" id="C0M7M2"/>
<dbReference type="GeneID" id="83705469"/>
<dbReference type="KEGG" id="seu:SEQ_1826"/>
<dbReference type="HOGENOM" id="CLU_157169_0_0_9"/>
<dbReference type="OrthoDB" id="2112130at2"/>
<dbReference type="Proteomes" id="UP000001365">
    <property type="component" value="Chromosome"/>
</dbReference>
<dbReference type="GO" id="GO:0009295">
    <property type="term" value="C:nucleoid"/>
    <property type="evidence" value="ECO:0007669"/>
    <property type="project" value="UniProtKB-SubCell"/>
</dbReference>
<dbReference type="GO" id="GO:0006260">
    <property type="term" value="P:DNA replication"/>
    <property type="evidence" value="ECO:0007669"/>
    <property type="project" value="UniProtKB-UniRule"/>
</dbReference>
<dbReference type="HAMAP" id="MF_01159">
    <property type="entry name" value="YabA"/>
    <property type="match status" value="1"/>
</dbReference>
<dbReference type="InterPro" id="IPR010377">
    <property type="entry name" value="YabA"/>
</dbReference>
<dbReference type="NCBIfam" id="NF009640">
    <property type="entry name" value="PRK13169.1-1"/>
    <property type="match status" value="1"/>
</dbReference>
<dbReference type="Pfam" id="PF06156">
    <property type="entry name" value="YabA"/>
    <property type="match status" value="1"/>
</dbReference>
<dbReference type="PIRSF" id="PIRSF021439">
    <property type="entry name" value="DUF972"/>
    <property type="match status" value="1"/>
</dbReference>
<protein>
    <recommendedName>
        <fullName evidence="1">Replication initiation control protein YabA</fullName>
    </recommendedName>
</protein>
<keyword id="KW-0963">Cytoplasm</keyword>
<keyword id="KW-0235">DNA replication</keyword>
<keyword id="KW-0236">DNA replication inhibitor</keyword>
<keyword id="KW-0479">Metal-binding</keyword>
<keyword id="KW-0862">Zinc</keyword>
<organism>
    <name type="scientific">Streptococcus equi subsp. equi (strain 4047)</name>
    <dbReference type="NCBI Taxonomy" id="553482"/>
    <lineage>
        <taxon>Bacteria</taxon>
        <taxon>Bacillati</taxon>
        <taxon>Bacillota</taxon>
        <taxon>Bacilli</taxon>
        <taxon>Lactobacillales</taxon>
        <taxon>Streptococcaceae</taxon>
        <taxon>Streptococcus</taxon>
    </lineage>
</organism>
<accession>C0M7M2</accession>